<dbReference type="EC" id="2.4.2.29" evidence="1"/>
<dbReference type="EMBL" id="AJ749949">
    <property type="protein sequence ID" value="CAG45753.1"/>
    <property type="molecule type" value="Genomic_DNA"/>
</dbReference>
<dbReference type="RefSeq" id="WP_003021291.1">
    <property type="nucleotide sequence ID" value="NC_006570.2"/>
</dbReference>
<dbReference type="RefSeq" id="YP_170094.1">
    <property type="nucleotide sequence ID" value="NC_006570.2"/>
</dbReference>
<dbReference type="SMR" id="Q5NFU8"/>
<dbReference type="IntAct" id="Q5NFU8">
    <property type="interactions" value="3"/>
</dbReference>
<dbReference type="STRING" id="177416.FTT_1120c"/>
<dbReference type="DNASU" id="3190761"/>
<dbReference type="EnsemblBacteria" id="CAG45753">
    <property type="protein sequence ID" value="CAG45753"/>
    <property type="gene ID" value="FTT_1120c"/>
</dbReference>
<dbReference type="KEGG" id="ftu:FTT_1120c"/>
<dbReference type="eggNOG" id="COG0343">
    <property type="taxonomic scope" value="Bacteria"/>
</dbReference>
<dbReference type="OrthoDB" id="9805417at2"/>
<dbReference type="UniPathway" id="UPA00392"/>
<dbReference type="Proteomes" id="UP000001174">
    <property type="component" value="Chromosome"/>
</dbReference>
<dbReference type="GO" id="GO:0005829">
    <property type="term" value="C:cytosol"/>
    <property type="evidence" value="ECO:0007669"/>
    <property type="project" value="TreeGrafter"/>
</dbReference>
<dbReference type="GO" id="GO:0046872">
    <property type="term" value="F:metal ion binding"/>
    <property type="evidence" value="ECO:0007669"/>
    <property type="project" value="UniProtKB-KW"/>
</dbReference>
<dbReference type="GO" id="GO:0008479">
    <property type="term" value="F:tRNA-guanosine(34) queuine transglycosylase activity"/>
    <property type="evidence" value="ECO:0007669"/>
    <property type="project" value="UniProtKB-UniRule"/>
</dbReference>
<dbReference type="GO" id="GO:0008616">
    <property type="term" value="P:queuosine biosynthetic process"/>
    <property type="evidence" value="ECO:0007669"/>
    <property type="project" value="UniProtKB-UniRule"/>
</dbReference>
<dbReference type="GO" id="GO:0002099">
    <property type="term" value="P:tRNA wobble guanine modification"/>
    <property type="evidence" value="ECO:0007669"/>
    <property type="project" value="TreeGrafter"/>
</dbReference>
<dbReference type="GO" id="GO:0101030">
    <property type="term" value="P:tRNA-guanine transglycosylation"/>
    <property type="evidence" value="ECO:0007669"/>
    <property type="project" value="InterPro"/>
</dbReference>
<dbReference type="FunFam" id="3.20.20.105:FF:000001">
    <property type="entry name" value="Queuine tRNA-ribosyltransferase"/>
    <property type="match status" value="1"/>
</dbReference>
<dbReference type="Gene3D" id="3.20.20.105">
    <property type="entry name" value="Queuine tRNA-ribosyltransferase-like"/>
    <property type="match status" value="1"/>
</dbReference>
<dbReference type="HAMAP" id="MF_00168">
    <property type="entry name" value="Q_tRNA_Tgt"/>
    <property type="match status" value="1"/>
</dbReference>
<dbReference type="InterPro" id="IPR050076">
    <property type="entry name" value="ArchSynthase1/Queuine_TRR"/>
</dbReference>
<dbReference type="InterPro" id="IPR004803">
    <property type="entry name" value="TGT"/>
</dbReference>
<dbReference type="InterPro" id="IPR036511">
    <property type="entry name" value="TGT-like_sf"/>
</dbReference>
<dbReference type="InterPro" id="IPR002616">
    <property type="entry name" value="tRNA_ribo_trans-like"/>
</dbReference>
<dbReference type="NCBIfam" id="TIGR00430">
    <property type="entry name" value="Q_tRNA_tgt"/>
    <property type="match status" value="1"/>
</dbReference>
<dbReference type="NCBIfam" id="TIGR00449">
    <property type="entry name" value="tgt_general"/>
    <property type="match status" value="1"/>
</dbReference>
<dbReference type="PANTHER" id="PTHR46499">
    <property type="entry name" value="QUEUINE TRNA-RIBOSYLTRANSFERASE"/>
    <property type="match status" value="1"/>
</dbReference>
<dbReference type="PANTHER" id="PTHR46499:SF1">
    <property type="entry name" value="QUEUINE TRNA-RIBOSYLTRANSFERASE"/>
    <property type="match status" value="1"/>
</dbReference>
<dbReference type="Pfam" id="PF01702">
    <property type="entry name" value="TGT"/>
    <property type="match status" value="1"/>
</dbReference>
<dbReference type="SUPFAM" id="SSF51713">
    <property type="entry name" value="tRNA-guanine transglycosylase"/>
    <property type="match status" value="1"/>
</dbReference>
<comment type="function">
    <text evidence="1">Catalyzes the base-exchange of a guanine (G) residue with the queuine precursor 7-aminomethyl-7-deazaguanine (PreQ1) at position 34 (anticodon wobble position) in tRNAs with GU(N) anticodons (tRNA-Asp, -Asn, -His and -Tyr). Catalysis occurs through a double-displacement mechanism. The nucleophile active site attacks the C1' of nucleotide 34 to detach the guanine base from the RNA, forming a covalent enzyme-RNA intermediate. The proton acceptor active site deprotonates the incoming PreQ1, allowing a nucleophilic attack on the C1' of the ribose to form the product. After dissociation, two additional enzymatic reactions on the tRNA convert PreQ1 to queuine (Q), resulting in the hypermodified nucleoside queuosine (7-(((4,5-cis-dihydroxy-2-cyclopenten-1-yl)amino)methyl)-7-deazaguanosine).</text>
</comment>
<comment type="catalytic activity">
    <reaction evidence="1">
        <text>7-aminomethyl-7-carbaguanine + guanosine(34) in tRNA = 7-aminomethyl-7-carbaguanosine(34) in tRNA + guanine</text>
        <dbReference type="Rhea" id="RHEA:24104"/>
        <dbReference type="Rhea" id="RHEA-COMP:10341"/>
        <dbReference type="Rhea" id="RHEA-COMP:10342"/>
        <dbReference type="ChEBI" id="CHEBI:16235"/>
        <dbReference type="ChEBI" id="CHEBI:58703"/>
        <dbReference type="ChEBI" id="CHEBI:74269"/>
        <dbReference type="ChEBI" id="CHEBI:82833"/>
        <dbReference type="EC" id="2.4.2.29"/>
    </reaction>
</comment>
<comment type="cofactor">
    <cofactor evidence="1">
        <name>Zn(2+)</name>
        <dbReference type="ChEBI" id="CHEBI:29105"/>
    </cofactor>
    <text evidence="1">Binds 1 zinc ion per subunit.</text>
</comment>
<comment type="pathway">
    <text evidence="1">tRNA modification; tRNA-queuosine biosynthesis.</text>
</comment>
<comment type="subunit">
    <text evidence="1">Homodimer. Within each dimer, one monomer is responsible for RNA recognition and catalysis, while the other monomer binds to the replacement base PreQ1.</text>
</comment>
<comment type="similarity">
    <text evidence="1">Belongs to the queuine tRNA-ribosyltransferase family.</text>
</comment>
<evidence type="ECO:0000255" key="1">
    <source>
        <dbReference type="HAMAP-Rule" id="MF_00168"/>
    </source>
</evidence>
<organism>
    <name type="scientific">Francisella tularensis subsp. tularensis (strain SCHU S4 / Schu 4)</name>
    <dbReference type="NCBI Taxonomy" id="177416"/>
    <lineage>
        <taxon>Bacteria</taxon>
        <taxon>Pseudomonadati</taxon>
        <taxon>Pseudomonadota</taxon>
        <taxon>Gammaproteobacteria</taxon>
        <taxon>Thiotrichales</taxon>
        <taxon>Francisellaceae</taxon>
        <taxon>Francisella</taxon>
    </lineage>
</organism>
<sequence>MTVMKFDLIKKEGKARRGKITFPRGDIQTPAFMPVGTYGAVKSLSPVELKEMGAEIILGNTFHLWLRPGTEIIKKHGSLHGFNGWDKPILTDSGGFQVFSLGKMRKLTEEGVTFKSPINSSKVFLSPEISMQVQRDLGSDIVMCFDECTPYPATEKEAKESMELSMRWAKRSKEAHGDNPSALFGIIQGGMYEHLRDESLAKLKEIDFDGFAIGGLSVGEPKEDMIRILDHTAHQMPEDKPRYLMGVGTPKDLVEAVYRGVDMFDCVMPSRNARNGHIFTSEGVIKIRNSKYKDDTSPLDPNCDCYTCKNFTKSYLHHLDKTKEILGSRLNTIHNLTFYQNLMKSIRKALDEGRFSEFRKEFLASYK</sequence>
<reference key="1">
    <citation type="journal article" date="2005" name="Nat. Genet.">
        <title>The complete genome sequence of Francisella tularensis, the causative agent of tularemia.</title>
        <authorList>
            <person name="Larsson P."/>
            <person name="Oyston P.C.F."/>
            <person name="Chain P."/>
            <person name="Chu M.C."/>
            <person name="Duffield M."/>
            <person name="Fuxelius H.-H."/>
            <person name="Garcia E."/>
            <person name="Haelltorp G."/>
            <person name="Johansson D."/>
            <person name="Isherwood K.E."/>
            <person name="Karp P.D."/>
            <person name="Larsson E."/>
            <person name="Liu Y."/>
            <person name="Michell S."/>
            <person name="Prior J."/>
            <person name="Prior R."/>
            <person name="Malfatti S."/>
            <person name="Sjoestedt A."/>
            <person name="Svensson K."/>
            <person name="Thompson N."/>
            <person name="Vergez L."/>
            <person name="Wagg J.K."/>
            <person name="Wren B.W."/>
            <person name="Lindler L.E."/>
            <person name="Andersson S.G.E."/>
            <person name="Forsman M."/>
            <person name="Titball R.W."/>
        </authorList>
    </citation>
    <scope>NUCLEOTIDE SEQUENCE [LARGE SCALE GENOMIC DNA]</scope>
    <source>
        <strain>SCHU S4 / Schu 4</strain>
    </source>
</reference>
<gene>
    <name evidence="1" type="primary">tgt</name>
    <name type="ordered locus">FTT_1120c</name>
</gene>
<proteinExistence type="inferred from homology"/>
<name>TGT_FRATT</name>
<protein>
    <recommendedName>
        <fullName evidence="1">Queuine tRNA-ribosyltransferase</fullName>
        <ecNumber evidence="1">2.4.2.29</ecNumber>
    </recommendedName>
    <alternativeName>
        <fullName evidence="1">Guanine insertion enzyme</fullName>
    </alternativeName>
    <alternativeName>
        <fullName evidence="1">tRNA-guanine transglycosylase</fullName>
    </alternativeName>
</protein>
<feature type="chain" id="PRO_0000135476" description="Queuine tRNA-ribosyltransferase">
    <location>
        <begin position="1"/>
        <end position="367"/>
    </location>
</feature>
<feature type="region of interest" description="RNA binding" evidence="1">
    <location>
        <begin position="246"/>
        <end position="252"/>
    </location>
</feature>
<feature type="active site" description="Proton acceptor" evidence="1">
    <location>
        <position position="92"/>
    </location>
</feature>
<feature type="active site" description="Nucleophile" evidence="1">
    <location>
        <position position="265"/>
    </location>
</feature>
<feature type="binding site" evidence="1">
    <location>
        <begin position="92"/>
        <end position="96"/>
    </location>
    <ligand>
        <name>substrate</name>
    </ligand>
</feature>
<feature type="binding site" evidence="1">
    <location>
        <position position="146"/>
    </location>
    <ligand>
        <name>substrate</name>
    </ligand>
</feature>
<feature type="binding site" evidence="1">
    <location>
        <position position="188"/>
    </location>
    <ligand>
        <name>substrate</name>
    </ligand>
</feature>
<feature type="binding site" evidence="1">
    <location>
        <position position="215"/>
    </location>
    <ligand>
        <name>substrate</name>
    </ligand>
</feature>
<feature type="binding site" evidence="1">
    <location>
        <position position="303"/>
    </location>
    <ligand>
        <name>Zn(2+)</name>
        <dbReference type="ChEBI" id="CHEBI:29105"/>
    </ligand>
</feature>
<feature type="binding site" evidence="1">
    <location>
        <position position="305"/>
    </location>
    <ligand>
        <name>Zn(2+)</name>
        <dbReference type="ChEBI" id="CHEBI:29105"/>
    </ligand>
</feature>
<feature type="binding site" evidence="1">
    <location>
        <position position="308"/>
    </location>
    <ligand>
        <name>Zn(2+)</name>
        <dbReference type="ChEBI" id="CHEBI:29105"/>
    </ligand>
</feature>
<feature type="binding site" evidence="1">
    <location>
        <position position="334"/>
    </location>
    <ligand>
        <name>Zn(2+)</name>
        <dbReference type="ChEBI" id="CHEBI:29105"/>
    </ligand>
</feature>
<keyword id="KW-0328">Glycosyltransferase</keyword>
<keyword id="KW-0479">Metal-binding</keyword>
<keyword id="KW-0671">Queuosine biosynthesis</keyword>
<keyword id="KW-1185">Reference proteome</keyword>
<keyword id="KW-0808">Transferase</keyword>
<keyword id="KW-0819">tRNA processing</keyword>
<keyword id="KW-0862">Zinc</keyword>
<accession>Q5NFU8</accession>